<feature type="chain" id="PRO_0000260960" description="Large ribosomal subunit protein uL6">
    <location>
        <begin position="1"/>
        <end position="181"/>
    </location>
</feature>
<evidence type="ECO:0000255" key="1">
    <source>
        <dbReference type="HAMAP-Rule" id="MF_01365"/>
    </source>
</evidence>
<evidence type="ECO:0000305" key="2"/>
<dbReference type="EMBL" id="CP000110">
    <property type="protein sequence ID" value="ABB34138.1"/>
    <property type="molecule type" value="Genomic_DNA"/>
</dbReference>
<dbReference type="RefSeq" id="WP_011363381.1">
    <property type="nucleotide sequence ID" value="NC_007516.1"/>
</dbReference>
<dbReference type="SMR" id="Q3AMP4"/>
<dbReference type="STRING" id="110662.Syncc9605_0362"/>
<dbReference type="KEGG" id="syd:Syncc9605_0362"/>
<dbReference type="eggNOG" id="COG0097">
    <property type="taxonomic scope" value="Bacteria"/>
</dbReference>
<dbReference type="HOGENOM" id="CLU_065464_1_2_3"/>
<dbReference type="OrthoDB" id="9805007at2"/>
<dbReference type="GO" id="GO:0022625">
    <property type="term" value="C:cytosolic large ribosomal subunit"/>
    <property type="evidence" value="ECO:0007669"/>
    <property type="project" value="TreeGrafter"/>
</dbReference>
<dbReference type="GO" id="GO:0019843">
    <property type="term" value="F:rRNA binding"/>
    <property type="evidence" value="ECO:0007669"/>
    <property type="project" value="UniProtKB-UniRule"/>
</dbReference>
<dbReference type="GO" id="GO:0003735">
    <property type="term" value="F:structural constituent of ribosome"/>
    <property type="evidence" value="ECO:0007669"/>
    <property type="project" value="InterPro"/>
</dbReference>
<dbReference type="GO" id="GO:0002181">
    <property type="term" value="P:cytoplasmic translation"/>
    <property type="evidence" value="ECO:0007669"/>
    <property type="project" value="TreeGrafter"/>
</dbReference>
<dbReference type="FunFam" id="3.90.930.12:FF:000001">
    <property type="entry name" value="50S ribosomal protein L6"/>
    <property type="match status" value="1"/>
</dbReference>
<dbReference type="FunFam" id="3.90.930.12:FF:000002">
    <property type="entry name" value="50S ribosomal protein L6"/>
    <property type="match status" value="1"/>
</dbReference>
<dbReference type="Gene3D" id="3.90.930.12">
    <property type="entry name" value="Ribosomal protein L6, alpha-beta domain"/>
    <property type="match status" value="2"/>
</dbReference>
<dbReference type="HAMAP" id="MF_01365_B">
    <property type="entry name" value="Ribosomal_uL6_B"/>
    <property type="match status" value="1"/>
</dbReference>
<dbReference type="InterPro" id="IPR000702">
    <property type="entry name" value="Ribosomal_uL6-like"/>
</dbReference>
<dbReference type="InterPro" id="IPR036789">
    <property type="entry name" value="Ribosomal_uL6-like_a/b-dom_sf"/>
</dbReference>
<dbReference type="InterPro" id="IPR020040">
    <property type="entry name" value="Ribosomal_uL6_a/b-dom"/>
</dbReference>
<dbReference type="InterPro" id="IPR019906">
    <property type="entry name" value="Ribosomal_uL6_bac-type"/>
</dbReference>
<dbReference type="InterPro" id="IPR002358">
    <property type="entry name" value="Ribosomal_uL6_CS"/>
</dbReference>
<dbReference type="NCBIfam" id="TIGR03654">
    <property type="entry name" value="L6_bact"/>
    <property type="match status" value="1"/>
</dbReference>
<dbReference type="PANTHER" id="PTHR11655">
    <property type="entry name" value="60S/50S RIBOSOMAL PROTEIN L6/L9"/>
    <property type="match status" value="1"/>
</dbReference>
<dbReference type="PANTHER" id="PTHR11655:SF14">
    <property type="entry name" value="LARGE RIBOSOMAL SUBUNIT PROTEIN UL6M"/>
    <property type="match status" value="1"/>
</dbReference>
<dbReference type="Pfam" id="PF00347">
    <property type="entry name" value="Ribosomal_L6"/>
    <property type="match status" value="2"/>
</dbReference>
<dbReference type="PIRSF" id="PIRSF002162">
    <property type="entry name" value="Ribosomal_L6"/>
    <property type="match status" value="1"/>
</dbReference>
<dbReference type="PRINTS" id="PR00059">
    <property type="entry name" value="RIBOSOMALL6"/>
</dbReference>
<dbReference type="SUPFAM" id="SSF56053">
    <property type="entry name" value="Ribosomal protein L6"/>
    <property type="match status" value="2"/>
</dbReference>
<dbReference type="PROSITE" id="PS00525">
    <property type="entry name" value="RIBOSOMAL_L6_1"/>
    <property type="match status" value="1"/>
</dbReference>
<name>RL6_SYNSC</name>
<comment type="function">
    <text evidence="1">This protein binds to the 23S rRNA, and is important in its secondary structure. It is located near the subunit interface in the base of the L7/L12 stalk, and near the tRNA binding site of the peptidyltransferase center.</text>
</comment>
<comment type="subunit">
    <text evidence="1">Part of the 50S ribosomal subunit.</text>
</comment>
<comment type="similarity">
    <text evidence="1">Belongs to the universal ribosomal protein uL6 family.</text>
</comment>
<sequence>MSRIGKNPVPVPEKVTVSLDGLTVKVKGPKGELERTLPEGVSVSVSQDNNTIVVSPTSTKRISRERHGLSRTLVANMIEGVSNGYSKALEIVGVGSRAQVKGKTLVVSAGYSHPVEMEAPEGITFKVENNTRVIVSGIDKELVGNEAAKVRAIRPPEPYKGKGIKYEGERILRKAGKSGKK</sequence>
<protein>
    <recommendedName>
        <fullName evidence="1">Large ribosomal subunit protein uL6</fullName>
    </recommendedName>
    <alternativeName>
        <fullName evidence="2">50S ribosomal protein L6</fullName>
    </alternativeName>
</protein>
<organism>
    <name type="scientific">Synechococcus sp. (strain CC9605)</name>
    <dbReference type="NCBI Taxonomy" id="110662"/>
    <lineage>
        <taxon>Bacteria</taxon>
        <taxon>Bacillati</taxon>
        <taxon>Cyanobacteriota</taxon>
        <taxon>Cyanophyceae</taxon>
        <taxon>Synechococcales</taxon>
        <taxon>Synechococcaceae</taxon>
        <taxon>Synechococcus</taxon>
    </lineage>
</organism>
<accession>Q3AMP4</accession>
<proteinExistence type="inferred from homology"/>
<keyword id="KW-0687">Ribonucleoprotein</keyword>
<keyword id="KW-0689">Ribosomal protein</keyword>
<keyword id="KW-0694">RNA-binding</keyword>
<keyword id="KW-0699">rRNA-binding</keyword>
<reference key="1">
    <citation type="submission" date="2005-07" db="EMBL/GenBank/DDBJ databases">
        <title>Complete sequence of Synechococcus sp. CC9605.</title>
        <authorList>
            <consortium name="US DOE Joint Genome Institute"/>
            <person name="Copeland A."/>
            <person name="Lucas S."/>
            <person name="Lapidus A."/>
            <person name="Barry K."/>
            <person name="Detter J.C."/>
            <person name="Glavina T."/>
            <person name="Hammon N."/>
            <person name="Israni S."/>
            <person name="Pitluck S."/>
            <person name="Schmutz J."/>
            <person name="Martinez M."/>
            <person name="Larimer F."/>
            <person name="Land M."/>
            <person name="Kyrpides N."/>
            <person name="Ivanova N."/>
            <person name="Richardson P."/>
        </authorList>
    </citation>
    <scope>NUCLEOTIDE SEQUENCE [LARGE SCALE GENOMIC DNA]</scope>
    <source>
        <strain>CC9605</strain>
    </source>
</reference>
<gene>
    <name evidence="1" type="primary">rplF</name>
    <name evidence="1" type="synonym">rpl6</name>
    <name type="ordered locus">Syncc9605_0362</name>
</gene>